<accession>P30600</accession>
<accession>O74681</accession>
<evidence type="ECO:0000255" key="1"/>
<evidence type="ECO:0000256" key="2">
    <source>
        <dbReference type="SAM" id="MobiDB-lite"/>
    </source>
</evidence>
<evidence type="ECO:0000269" key="3">
    <source>
    </source>
</evidence>
<evidence type="ECO:0000269" key="4">
    <source>
    </source>
</evidence>
<evidence type="ECO:0000303" key="5">
    <source>
    </source>
</evidence>
<evidence type="ECO:0000305" key="6"/>
<evidence type="ECO:0000305" key="7">
    <source>
    </source>
</evidence>
<evidence type="ECO:0000305" key="8">
    <source>
    </source>
</evidence>
<reference key="1">
    <citation type="submission" date="1998-03" db="EMBL/GenBank/DDBJ databases">
        <title>Characterization of WdCHS1, a class II chitin synthase gene, and multiple wdchs mutants of Wangiella dermatitidis.</title>
        <authorList>
            <person name="Zheng L."/>
            <person name="Mendoza A.L."/>
            <person name="Wang Z."/>
            <person name="Szaniszlo P.J."/>
        </authorList>
    </citation>
    <scope>NUCLEOTIDE SEQUENCE [GENOMIC DNA]</scope>
    <source>
        <strain>8656</strain>
    </source>
</reference>
<reference key="2">
    <citation type="journal article" date="1992" name="Proc. Natl. Acad. Sci. U.S.A.">
        <title>Classification of fungal chitin synthases.</title>
        <authorList>
            <person name="Bowen A.R."/>
            <person name="Chen-Wu J.L.-P."/>
            <person name="Momany M."/>
            <person name="Young R."/>
            <person name="Szaniszlo P.J."/>
            <person name="Robbins P.W."/>
        </authorList>
    </citation>
    <scope>NUCLEOTIDE SEQUENCE [GENOMIC DNA] OF 265-468</scope>
</reference>
<reference key="3">
    <citation type="journal article" date="2002" name="Microbiology">
        <title>Compensatory expression of five chitin synthase genes, a response to stress stimuli, in Wangiella (Exophiala) dermatitidis, a melanized fungal pathogen of humans.</title>
        <authorList>
            <person name="Wang Q."/>
            <person name="Liu H."/>
            <person name="Szaniszlo P.J."/>
        </authorList>
    </citation>
    <scope>INDUCTION</scope>
    <scope>DISRUPTION PHENOTYPE</scope>
</reference>
<reference key="4">
    <citation type="journal article" date="2006" name="Arch. Microbiol.">
        <title>WdChs1p, a class II chitin synthase, is more responsible than WdChs2p (Class I) for normal yeast reproductive growth in the polymorphic, pathogenic fungus Wangiella (Exophiala) dermatitidis.</title>
        <authorList>
            <person name="Zheng L."/>
            <person name="Mendoza L."/>
            <person name="Wang Z."/>
            <person name="Liu H."/>
            <person name="Park C."/>
            <person name="Kauffman S."/>
            <person name="Becker J.M."/>
            <person name="Szaniszlo P.J."/>
        </authorList>
    </citation>
    <scope>FUNCTION</scope>
    <scope>DISRUPTION PHENOTYPE</scope>
</reference>
<protein>
    <recommendedName>
        <fullName evidence="5">Chitin synthase 1</fullName>
        <ecNumber evidence="8">2.4.1.16</ecNumber>
    </recommendedName>
    <alternativeName>
        <fullName evidence="6">Chitin-UDP acetyl-glucosaminyl transferase 1</fullName>
    </alternativeName>
    <alternativeName>
        <fullName evidence="5">Class-II chitin synthase 1</fullName>
    </alternativeName>
</protein>
<name>CHS1_EXODE</name>
<dbReference type="EC" id="2.4.1.16" evidence="8"/>
<dbReference type="EMBL" id="AF054503">
    <property type="protein sequence ID" value="AAC36064.1"/>
    <property type="molecule type" value="Genomic_DNA"/>
</dbReference>
<dbReference type="EMBL" id="M81905">
    <property type="protein sequence ID" value="AAA30334.1"/>
    <property type="molecule type" value="Genomic_DNA"/>
</dbReference>
<dbReference type="PIR" id="E45189">
    <property type="entry name" value="E45189"/>
</dbReference>
<dbReference type="SMR" id="P30600"/>
<dbReference type="CAZy" id="GT2">
    <property type="family name" value="Glycosyltransferase Family 2"/>
</dbReference>
<dbReference type="VEuPathDB" id="FungiDB:HMPREF1120_07981"/>
<dbReference type="BRENDA" id="2.4.1.16">
    <property type="organism ID" value="6682"/>
</dbReference>
<dbReference type="GO" id="GO:0030428">
    <property type="term" value="C:cell septum"/>
    <property type="evidence" value="ECO:0007669"/>
    <property type="project" value="TreeGrafter"/>
</dbReference>
<dbReference type="GO" id="GO:0005886">
    <property type="term" value="C:plasma membrane"/>
    <property type="evidence" value="ECO:0007669"/>
    <property type="project" value="UniProtKB-SubCell"/>
</dbReference>
<dbReference type="GO" id="GO:0004100">
    <property type="term" value="F:chitin synthase activity"/>
    <property type="evidence" value="ECO:0007669"/>
    <property type="project" value="UniProtKB-EC"/>
</dbReference>
<dbReference type="GO" id="GO:0071555">
    <property type="term" value="P:cell wall organization"/>
    <property type="evidence" value="ECO:0007669"/>
    <property type="project" value="UniProtKB-KW"/>
</dbReference>
<dbReference type="GO" id="GO:0006031">
    <property type="term" value="P:chitin biosynthetic process"/>
    <property type="evidence" value="ECO:0007669"/>
    <property type="project" value="InterPro"/>
</dbReference>
<dbReference type="CDD" id="cd04190">
    <property type="entry name" value="Chitin_synth_C"/>
    <property type="match status" value="1"/>
</dbReference>
<dbReference type="InterPro" id="IPR004835">
    <property type="entry name" value="Chitin_synth"/>
</dbReference>
<dbReference type="InterPro" id="IPR004834">
    <property type="entry name" value="Chitin_synth_fun"/>
</dbReference>
<dbReference type="InterPro" id="IPR013616">
    <property type="entry name" value="Chitin_synth_N"/>
</dbReference>
<dbReference type="InterPro" id="IPR001173">
    <property type="entry name" value="Glyco_trans_2-like"/>
</dbReference>
<dbReference type="InterPro" id="IPR029044">
    <property type="entry name" value="Nucleotide-diphossugar_trans"/>
</dbReference>
<dbReference type="PANTHER" id="PTHR22914">
    <property type="entry name" value="CHITIN SYNTHASE"/>
    <property type="match status" value="1"/>
</dbReference>
<dbReference type="PANTHER" id="PTHR22914:SF38">
    <property type="entry name" value="CHITIN SYNTHASE 2"/>
    <property type="match status" value="1"/>
</dbReference>
<dbReference type="Pfam" id="PF01644">
    <property type="entry name" value="Chitin_synth_1"/>
    <property type="match status" value="1"/>
</dbReference>
<dbReference type="Pfam" id="PF08407">
    <property type="entry name" value="Chitin_synth_1N"/>
    <property type="match status" value="1"/>
</dbReference>
<dbReference type="Pfam" id="PF13632">
    <property type="entry name" value="Glyco_trans_2_3"/>
    <property type="match status" value="1"/>
</dbReference>
<dbReference type="SUPFAM" id="SSF53448">
    <property type="entry name" value="Nucleotide-diphospho-sugar transferases"/>
    <property type="match status" value="1"/>
</dbReference>
<proteinExistence type="evidence at transcript level"/>
<keyword id="KW-1003">Cell membrane</keyword>
<keyword id="KW-0961">Cell wall biogenesis/degradation</keyword>
<keyword id="KW-0328">Glycosyltransferase</keyword>
<keyword id="KW-0472">Membrane</keyword>
<keyword id="KW-0808">Transferase</keyword>
<keyword id="KW-0812">Transmembrane</keyword>
<keyword id="KW-1133">Transmembrane helix</keyword>
<gene>
    <name evidence="5" type="primary">CHS1</name>
</gene>
<comment type="function">
    <text evidence="4 7">Polymerizes chitin, a structural polymer of the cell wall and septum, by transferring the sugar moiety of UDP-GlcNAc to the non-reducing end of the growing chitin polymer (Probable). CHS1 mainly responsible for normal yeast cell reproductive growth (PubMed:16544168).</text>
</comment>
<comment type="catalytic activity">
    <reaction evidence="7">
        <text>[(1-&gt;4)-N-acetyl-beta-D-glucosaminyl](n) + UDP-N-acetyl-alpha-D-glucosamine = [(1-&gt;4)-N-acetyl-beta-D-glucosaminyl](n+1) + UDP + H(+)</text>
        <dbReference type="Rhea" id="RHEA:16637"/>
        <dbReference type="Rhea" id="RHEA-COMP:9593"/>
        <dbReference type="Rhea" id="RHEA-COMP:9595"/>
        <dbReference type="ChEBI" id="CHEBI:15378"/>
        <dbReference type="ChEBI" id="CHEBI:17029"/>
        <dbReference type="ChEBI" id="CHEBI:57705"/>
        <dbReference type="ChEBI" id="CHEBI:58223"/>
        <dbReference type="EC" id="2.4.1.16"/>
    </reaction>
    <physiologicalReaction direction="left-to-right" evidence="7">
        <dbReference type="Rhea" id="RHEA:16638"/>
    </physiologicalReaction>
</comment>
<comment type="subcellular location">
    <subcellularLocation>
        <location evidence="6">Cell membrane</location>
        <topology evidence="1">Multi-pass membrane protein</topology>
    </subcellularLocation>
</comment>
<comment type="induction">
    <text evidence="3">The expression levels changes little with temperature change, regardless of whether the exposure to the higher temperature is for 3 h or 24 h.</text>
</comment>
<comment type="disruption phenotype">
    <text evidence="3 4">Leads to strains that are hyperpigmented in rich media (PubMed:16544168). Does not affect growth rate at both 25 and 37 degrees Celsius nor the virulence in a mouse model (PubMed:16544168). Affects the separation of yeast cells with enriched chitin in septal regions and increases the frequency of enlarged cells with multiple nuclei (PubMed:16544168). Leads to increased expression of CHS2 for compensation (PubMed:12213927).</text>
</comment>
<comment type="similarity">
    <text evidence="6">Belongs to the chitin synthase family. Class II subfamily.</text>
</comment>
<feature type="chain" id="PRO_0000193694" description="Chitin synthase 1">
    <location>
        <begin position="1"/>
        <end position="988"/>
    </location>
</feature>
<feature type="transmembrane region" description="Helical" evidence="1">
    <location>
        <begin position="577"/>
        <end position="596"/>
    </location>
</feature>
<feature type="transmembrane region" description="Helical" evidence="1">
    <location>
        <begin position="616"/>
        <end position="636"/>
    </location>
</feature>
<feature type="transmembrane region" description="Helical" evidence="1">
    <location>
        <begin position="656"/>
        <end position="676"/>
    </location>
</feature>
<feature type="transmembrane region" description="Helical" evidence="1">
    <location>
        <begin position="732"/>
        <end position="752"/>
    </location>
</feature>
<feature type="transmembrane region" description="Helical" evidence="1">
    <location>
        <begin position="764"/>
        <end position="784"/>
    </location>
</feature>
<feature type="transmembrane region" description="Helical" evidence="1">
    <location>
        <begin position="864"/>
        <end position="884"/>
    </location>
</feature>
<feature type="transmembrane region" description="Helical" evidence="1">
    <location>
        <begin position="911"/>
        <end position="931"/>
    </location>
</feature>
<feature type="region of interest" description="Disordered" evidence="2">
    <location>
        <begin position="29"/>
        <end position="75"/>
    </location>
</feature>
<feature type="region of interest" description="Disordered" evidence="2">
    <location>
        <begin position="950"/>
        <end position="988"/>
    </location>
</feature>
<feature type="compositionally biased region" description="Low complexity" evidence="2">
    <location>
        <begin position="44"/>
        <end position="66"/>
    </location>
</feature>
<feature type="compositionally biased region" description="Low complexity" evidence="2">
    <location>
        <begin position="957"/>
        <end position="976"/>
    </location>
</feature>
<feature type="sequence conflict" description="In Ref. 2; AAA30334." evidence="6" ref="2">
    <original>CV</original>
    <variation>KL</variation>
    <location>
        <begin position="265"/>
        <end position="266"/>
    </location>
</feature>
<feature type="sequence conflict" description="In Ref. 2; AAA30334." evidence="6" ref="2">
    <original>I</original>
    <variation>L</variation>
    <location>
        <position position="468"/>
    </location>
</feature>
<organism>
    <name type="scientific">Exophiala dermatitidis</name>
    <name type="common">Black yeast-like fungus</name>
    <name type="synonym">Wangiella dermatitidis</name>
    <dbReference type="NCBI Taxonomy" id="5970"/>
    <lineage>
        <taxon>Eukaryota</taxon>
        <taxon>Fungi</taxon>
        <taxon>Dikarya</taxon>
        <taxon>Ascomycota</taxon>
        <taxon>Pezizomycotina</taxon>
        <taxon>Eurotiomycetes</taxon>
        <taxon>Chaetothyriomycetidae</taxon>
        <taxon>Chaetothyriales</taxon>
        <taxon>Herpotrichiellaceae</taxon>
        <taxon>Exophiala</taxon>
    </lineage>
</organism>
<sequence>MVPFWTVVTDQHIKYTSHNKAGFIIDEEQHHWPPSSGSSLGRAPSIPLSSSNPRSPIRPSTPSRVSTDWTRPPAPSVAYEARDINGSPRLEPHHHNMEEVLEGLCHRAALFGQGGCGRNDNPNARAGVGKRCLCRSLLDNAGQRPKGKLEIGTFVHDCLDLYGRWCHYQSEVESLWPSAGRKTRYARPSRSTNDQEGGYVDQWRADSRMYIPTILHSFLPRRDEREFTHMRYTAVTCDPDDFVVKGYKLRQNIGPTMRETELFICVTMYNEDEIEFTRTMHGIMRNIAHFCSRTRSRTWGKDGWQKIVVCVIADGRQKVHPRTLNALAAMGVYQDGIAKNVVNQKEVTAHVYEYTTQVSLDETLKFKGAEKGIVPCQMIFCLKEKNKKKLNSHRWFFNAFGRALIPNVCILLDVGTKPDSKALYHLWKAFDQNSNVAGAAGEIKADKGKGWLGLLNPLVASQNFEYKISNILDKPLESVFGYITVLPGALSAYRYHALQNDPSGHGPLSQYFKGETLHGRDADVFTANMYLAEDRILCWELVAKRDEQWVLKFVKSAYGETDVPDTVPEFISQRRRWLNGAFFAAVYALVHFKQIWRTDHSLTRKILLHIEFIYQFISLLFTFFSLANFYLTFYFVAGSLADPTIDPFGHNIGKYIFVILRYVCVLLICLQFILSLGNRPQGEEIVSEYHGDVFHHHGIHDLCLRVYCHQATYDARSRKDRPQQSYKLGNNIFTNLIVSSVSTIGLFFLMSFLYLDPWHMFTSSAQYFALLPSYICTLQVYAFCNTHDVTWGTKGDNVMHTDLGAAKAIGSGNTVEVEMPSEQLDIDSAYDVALRNLRDRVEVPKPPVSENQLQEDYYKSVRTYVVASYMVCNAILAMAVSEAYPVGSHIGSNFYLTFILWSVAALALFRAIGSSAFGVINIVSAIAEGRIQAKFERIFGGGDERGRHRAGLGSGFSESGKTGITSGSGMSGMSLSDVTSKISEKLAG</sequence>